<organism>
    <name type="scientific">Rickettsia bellii (strain RML369-C)</name>
    <dbReference type="NCBI Taxonomy" id="336407"/>
    <lineage>
        <taxon>Bacteria</taxon>
        <taxon>Pseudomonadati</taxon>
        <taxon>Pseudomonadota</taxon>
        <taxon>Alphaproteobacteria</taxon>
        <taxon>Rickettsiales</taxon>
        <taxon>Rickettsiaceae</taxon>
        <taxon>Rickettsieae</taxon>
        <taxon>Rickettsia</taxon>
        <taxon>belli group</taxon>
    </lineage>
</organism>
<protein>
    <recommendedName>
        <fullName evidence="1">Heme A synthase</fullName>
        <shortName evidence="1">HAS</shortName>
        <ecNumber evidence="1">1.17.99.9</ecNumber>
    </recommendedName>
    <alternativeName>
        <fullName evidence="1">Cytochrome aa3-controlling protein</fullName>
    </alternativeName>
</protein>
<feature type="chain" id="PRO_0000349073" description="Heme A synthase">
    <location>
        <begin position="1"/>
        <end position="336"/>
    </location>
</feature>
<feature type="transmembrane region" description="Helical" evidence="1">
    <location>
        <begin position="5"/>
        <end position="25"/>
    </location>
</feature>
<feature type="transmembrane region" description="Helical" evidence="1">
    <location>
        <begin position="92"/>
        <end position="112"/>
    </location>
</feature>
<feature type="transmembrane region" description="Helical" evidence="1">
    <location>
        <begin position="117"/>
        <end position="137"/>
    </location>
</feature>
<feature type="transmembrane region" description="Helical" evidence="1">
    <location>
        <begin position="153"/>
        <end position="173"/>
    </location>
</feature>
<feature type="transmembrane region" description="Helical" evidence="1">
    <location>
        <begin position="191"/>
        <end position="211"/>
    </location>
</feature>
<feature type="transmembrane region" description="Helical" evidence="1">
    <location>
        <begin position="253"/>
        <end position="273"/>
    </location>
</feature>
<feature type="transmembrane region" description="Helical" evidence="1">
    <location>
        <begin position="284"/>
        <end position="304"/>
    </location>
</feature>
<feature type="transmembrane region" description="Helical" evidence="1">
    <location>
        <begin position="307"/>
        <end position="327"/>
    </location>
</feature>
<feature type="binding site" description="axial binding residue" evidence="1">
    <location>
        <position position="255"/>
    </location>
    <ligand>
        <name>heme</name>
        <dbReference type="ChEBI" id="CHEBI:30413"/>
    </ligand>
    <ligandPart>
        <name>Fe</name>
        <dbReference type="ChEBI" id="CHEBI:18248"/>
    </ligandPart>
</feature>
<feature type="binding site" description="axial binding residue" evidence="1">
    <location>
        <position position="315"/>
    </location>
    <ligand>
        <name>heme</name>
        <dbReference type="ChEBI" id="CHEBI:30413"/>
    </ligand>
    <ligandPart>
        <name>Fe</name>
        <dbReference type="ChEBI" id="CHEBI:18248"/>
    </ligandPart>
</feature>
<gene>
    <name evidence="1" type="primary">ctaA</name>
    <name type="synonym">coxW</name>
    <name type="ordered locus">RBE_0255</name>
</gene>
<sequence length="336" mass="38231">MQKNLTRWLLTCCIMVVAMIIVGGITRLTDSGLSIVEWRPVTGILPPFSYDTWQAEFAKYKAFPEYNAVNYGMTLSEFKFIYLLEFVHRLLGRATGLIYILPLIYFYFKGIIKNRDILSYIIVLLLFCVQGFMGWYMVKSGLVNHPSVSHFRLAFHLIIAVIIYHLLFYKLVKNCCDILLIPSQINLKLPLIFSVAAIAMIYVQIFLGALVAGLDAGLIYNSFPLMGGNFIPIEIKDNFISFKNWYDPVFVQFIHRLGAYSLSIIVIALIISLLKVKNPKLNKVAFYLSIALLIQLSTGVITLLYHVPIIAASMHQFFAIVLLSVVIWCYSLIKNS</sequence>
<name>CTAA_RICBR</name>
<accession>Q1RJX8</accession>
<comment type="function">
    <text evidence="1">Catalyzes the conversion of heme O to heme A by two successive hydroxylations of the methyl group at C8. The first hydroxylation forms heme I, the second hydroxylation results in an unstable dihydroxymethyl group, which spontaneously dehydrates, resulting in the formyl group of heme A.</text>
</comment>
<comment type="catalytic activity">
    <reaction evidence="1">
        <text>Fe(II)-heme o + 2 A + H2O = Fe(II)-heme a + 2 AH2</text>
        <dbReference type="Rhea" id="RHEA:63388"/>
        <dbReference type="ChEBI" id="CHEBI:13193"/>
        <dbReference type="ChEBI" id="CHEBI:15377"/>
        <dbReference type="ChEBI" id="CHEBI:17499"/>
        <dbReference type="ChEBI" id="CHEBI:60530"/>
        <dbReference type="ChEBI" id="CHEBI:61715"/>
        <dbReference type="EC" id="1.17.99.9"/>
    </reaction>
    <physiologicalReaction direction="left-to-right" evidence="1">
        <dbReference type="Rhea" id="RHEA:63389"/>
    </physiologicalReaction>
</comment>
<comment type="cofactor">
    <cofactor evidence="1">
        <name>heme b</name>
        <dbReference type="ChEBI" id="CHEBI:60344"/>
    </cofactor>
</comment>
<comment type="pathway">
    <text evidence="1">Porphyrin-containing compound metabolism; heme A biosynthesis; heme A from heme O: step 1/1.</text>
</comment>
<comment type="subunit">
    <text evidence="1">Interacts with CtaB.</text>
</comment>
<comment type="subcellular location">
    <subcellularLocation>
        <location evidence="1">Cell membrane</location>
        <topology evidence="1">Multi-pass membrane protein</topology>
    </subcellularLocation>
</comment>
<comment type="similarity">
    <text evidence="1">Belongs to the COX15/CtaA family. Type 2 subfamily.</text>
</comment>
<proteinExistence type="inferred from homology"/>
<keyword id="KW-1003">Cell membrane</keyword>
<keyword id="KW-0350">Heme biosynthesis</keyword>
<keyword id="KW-0408">Iron</keyword>
<keyword id="KW-0472">Membrane</keyword>
<keyword id="KW-0479">Metal-binding</keyword>
<keyword id="KW-0560">Oxidoreductase</keyword>
<keyword id="KW-0812">Transmembrane</keyword>
<keyword id="KW-1133">Transmembrane helix</keyword>
<evidence type="ECO:0000255" key="1">
    <source>
        <dbReference type="HAMAP-Rule" id="MF_01665"/>
    </source>
</evidence>
<dbReference type="EC" id="1.17.99.9" evidence="1"/>
<dbReference type="EMBL" id="CP000087">
    <property type="protein sequence ID" value="ABE04336.1"/>
    <property type="molecule type" value="Genomic_DNA"/>
</dbReference>
<dbReference type="RefSeq" id="WP_011476948.1">
    <property type="nucleotide sequence ID" value="NC_007940.1"/>
</dbReference>
<dbReference type="SMR" id="Q1RJX8"/>
<dbReference type="KEGG" id="rbe:RBE_0255"/>
<dbReference type="eggNOG" id="COG1612">
    <property type="taxonomic scope" value="Bacteria"/>
</dbReference>
<dbReference type="HOGENOM" id="CLU_017627_0_0_5"/>
<dbReference type="OrthoDB" id="9793156at2"/>
<dbReference type="UniPathway" id="UPA00269">
    <property type="reaction ID" value="UER00713"/>
</dbReference>
<dbReference type="Proteomes" id="UP000001951">
    <property type="component" value="Chromosome"/>
</dbReference>
<dbReference type="GO" id="GO:0005886">
    <property type="term" value="C:plasma membrane"/>
    <property type="evidence" value="ECO:0007669"/>
    <property type="project" value="UniProtKB-SubCell"/>
</dbReference>
<dbReference type="GO" id="GO:0046872">
    <property type="term" value="F:metal ion binding"/>
    <property type="evidence" value="ECO:0007669"/>
    <property type="project" value="UniProtKB-KW"/>
</dbReference>
<dbReference type="GO" id="GO:0016653">
    <property type="term" value="F:oxidoreductase activity, acting on NAD(P)H, heme protein as acceptor"/>
    <property type="evidence" value="ECO:0007669"/>
    <property type="project" value="InterPro"/>
</dbReference>
<dbReference type="GO" id="GO:0006784">
    <property type="term" value="P:heme A biosynthetic process"/>
    <property type="evidence" value="ECO:0007669"/>
    <property type="project" value="UniProtKB-UniRule"/>
</dbReference>
<dbReference type="HAMAP" id="MF_01665">
    <property type="entry name" value="HemeA_synth_type2"/>
    <property type="match status" value="1"/>
</dbReference>
<dbReference type="InterPro" id="IPR003780">
    <property type="entry name" value="COX15/CtaA_fam"/>
</dbReference>
<dbReference type="InterPro" id="IPR023754">
    <property type="entry name" value="HemeA_Synthase_type2"/>
</dbReference>
<dbReference type="PANTHER" id="PTHR23289">
    <property type="entry name" value="CYTOCHROME C OXIDASE ASSEMBLY PROTEIN COX15"/>
    <property type="match status" value="1"/>
</dbReference>
<dbReference type="PANTHER" id="PTHR23289:SF2">
    <property type="entry name" value="CYTOCHROME C OXIDASE ASSEMBLY PROTEIN COX15 HOMOLOG"/>
    <property type="match status" value="1"/>
</dbReference>
<dbReference type="Pfam" id="PF02628">
    <property type="entry name" value="COX15-CtaA"/>
    <property type="match status" value="1"/>
</dbReference>
<reference key="1">
    <citation type="journal article" date="2006" name="PLoS Genet.">
        <title>Genome sequence of Rickettsia bellii illuminates the role of amoebae in gene exchanges between intracellular pathogens.</title>
        <authorList>
            <person name="Ogata H."/>
            <person name="La Scola B."/>
            <person name="Audic S."/>
            <person name="Renesto P."/>
            <person name="Blanc G."/>
            <person name="Robert C."/>
            <person name="Fournier P.-E."/>
            <person name="Claverie J.-M."/>
            <person name="Raoult D."/>
        </authorList>
    </citation>
    <scope>NUCLEOTIDE SEQUENCE [LARGE SCALE GENOMIC DNA]</scope>
    <source>
        <strain>RML369-C</strain>
    </source>
</reference>